<evidence type="ECO:0000250" key="1">
    <source>
        <dbReference type="UniProtKB" id="P01942"/>
    </source>
</evidence>
<evidence type="ECO:0000250" key="2">
    <source>
        <dbReference type="UniProtKB" id="P01946"/>
    </source>
</evidence>
<evidence type="ECO:0000250" key="3">
    <source>
        <dbReference type="UniProtKB" id="P69905"/>
    </source>
</evidence>
<evidence type="ECO:0000255" key="4">
    <source>
        <dbReference type="PROSITE-ProRule" id="PRU00238"/>
    </source>
</evidence>
<proteinExistence type="evidence at transcript level"/>
<name>HBA_EQUPR</name>
<feature type="chain" id="PRO_0000052631" description="Hemoglobin subunit alpha">
    <location>
        <begin position="1"/>
        <end position="142"/>
    </location>
</feature>
<feature type="peptide" id="PRO_0000455875" description="Hemopressin" evidence="2">
    <location>
        <begin position="96"/>
        <end position="104"/>
    </location>
</feature>
<feature type="domain" description="Globin" evidence="4">
    <location>
        <begin position="2"/>
        <end position="142"/>
    </location>
</feature>
<feature type="binding site" evidence="4">
    <location>
        <position position="59"/>
    </location>
    <ligand>
        <name>O2</name>
        <dbReference type="ChEBI" id="CHEBI:15379"/>
    </ligand>
</feature>
<feature type="binding site" description="proximal binding residue" evidence="4">
    <location>
        <position position="88"/>
    </location>
    <ligand>
        <name>heme b</name>
        <dbReference type="ChEBI" id="CHEBI:60344"/>
    </ligand>
    <ligandPart>
        <name>Fe</name>
        <dbReference type="ChEBI" id="CHEBI:18248"/>
    </ligandPart>
</feature>
<feature type="modified residue" description="Phosphoserine" evidence="3">
    <location>
        <position position="4"/>
    </location>
</feature>
<feature type="modified residue" description="N6-succinyllysine" evidence="1">
    <location>
        <position position="8"/>
    </location>
</feature>
<feature type="modified residue" description="Phosphothreonine" evidence="3">
    <location>
        <position position="9"/>
    </location>
</feature>
<feature type="modified residue" description="N6-succinyllysine" evidence="1">
    <location>
        <position position="12"/>
    </location>
</feature>
<feature type="modified residue" description="N6-acetyllysine; alternate" evidence="3">
    <location>
        <position position="17"/>
    </location>
</feature>
<feature type="modified residue" description="N6-succinyllysine; alternate" evidence="1">
    <location>
        <position position="17"/>
    </location>
</feature>
<feature type="modified residue" description="N6-succinyllysine" evidence="1">
    <location>
        <position position="41"/>
    </location>
</feature>
<feature type="modified residue" description="Phosphoserine" evidence="3">
    <location>
        <position position="50"/>
    </location>
</feature>
<feature type="modified residue" description="Phosphoserine" evidence="1">
    <location>
        <position position="103"/>
    </location>
</feature>
<feature type="modified residue" description="Phosphothreonine" evidence="1">
    <location>
        <position position="109"/>
    </location>
</feature>
<feature type="modified residue" description="Phosphoserine" evidence="1">
    <location>
        <position position="125"/>
    </location>
</feature>
<feature type="modified residue" description="Phosphoserine" evidence="1">
    <location>
        <position position="132"/>
    </location>
</feature>
<feature type="modified residue" description="Phosphothreonine" evidence="1">
    <location>
        <position position="135"/>
    </location>
</feature>
<feature type="modified residue" description="Phosphothreonine" evidence="1">
    <location>
        <position position="138"/>
    </location>
</feature>
<feature type="modified residue" description="Phosphoserine" evidence="1">
    <location>
        <position position="139"/>
    </location>
</feature>
<accession>Q9XSE9</accession>
<comment type="function">
    <text>Involved in oxygen transport from the lung to the various peripheral tissues.</text>
</comment>
<comment type="function">
    <molecule>Hemopressin</molecule>
    <text evidence="2">Hemopressin acts as an antagonist peptide of the cannabinoid receptor CNR1. Hemopressin-binding efficiently blocks cannabinoid receptor CNR1 and subsequent signaling.</text>
</comment>
<comment type="subunit">
    <text>Heterotetramer of two alpha chains and two beta chains.</text>
</comment>
<comment type="tissue specificity">
    <text>Red blood cells.</text>
</comment>
<comment type="similarity">
    <text evidence="4">Belongs to the globin family.</text>
</comment>
<sequence length="142" mass="15229">MVLSAADKTNVKAAWSKVGGHAGEFGAEALERMFLGFPTTKTYFPHFDLSHGSAQVKAHGKKVGDALTLAVGHLDDLPGALSNLSDLHAHKLRVDPVNFKLLSHCLLSTLAVHLPNDFTPAVHASLDKFLSSVSTVLTSKYR</sequence>
<gene>
    <name type="primary">HBA</name>
</gene>
<keyword id="KW-0007">Acetylation</keyword>
<keyword id="KW-0349">Heme</keyword>
<keyword id="KW-0408">Iron</keyword>
<keyword id="KW-0479">Metal-binding</keyword>
<keyword id="KW-0561">Oxygen transport</keyword>
<keyword id="KW-0597">Phosphoprotein</keyword>
<keyword id="KW-0813">Transport</keyword>
<organism>
    <name type="scientific">Equus przewalskii</name>
    <name type="common">Przewalski's horse</name>
    <name type="synonym">Equus caballus przewalskii</name>
    <dbReference type="NCBI Taxonomy" id="9798"/>
    <lineage>
        <taxon>Eukaryota</taxon>
        <taxon>Metazoa</taxon>
        <taxon>Chordata</taxon>
        <taxon>Craniata</taxon>
        <taxon>Vertebrata</taxon>
        <taxon>Euteleostomi</taxon>
        <taxon>Mammalia</taxon>
        <taxon>Eutheria</taxon>
        <taxon>Laurasiatheria</taxon>
        <taxon>Perissodactyla</taxon>
        <taxon>Equidae</taxon>
        <taxon>Equus</taxon>
    </lineage>
</organism>
<dbReference type="EMBL" id="AF129141">
    <property type="protein sequence ID" value="AAB93467.1"/>
    <property type="molecule type" value="Genomic_DNA"/>
</dbReference>
<dbReference type="EMBL" id="AF129140">
    <property type="protein sequence ID" value="AAB93467.1"/>
    <property type="status" value="JOINED"/>
    <property type="molecule type" value="Genomic_DNA"/>
</dbReference>
<dbReference type="RefSeq" id="XP_008536600.1">
    <property type="nucleotide sequence ID" value="XM_008538378.1"/>
</dbReference>
<dbReference type="SMR" id="Q9XSE9"/>
<dbReference type="MINT" id="Q9XSE9"/>
<dbReference type="PeptideAtlas" id="Q9XSE9"/>
<dbReference type="GeneID" id="103563135"/>
<dbReference type="KEGG" id="epz:103563135"/>
<dbReference type="OrthoDB" id="109487at314145"/>
<dbReference type="Proteomes" id="UP000694949">
    <property type="component" value="Unplaced"/>
</dbReference>
<dbReference type="GO" id="GO:0072562">
    <property type="term" value="C:blood microparticle"/>
    <property type="evidence" value="ECO:0007669"/>
    <property type="project" value="TreeGrafter"/>
</dbReference>
<dbReference type="GO" id="GO:0031838">
    <property type="term" value="C:haptoglobin-hemoglobin complex"/>
    <property type="evidence" value="ECO:0007669"/>
    <property type="project" value="TreeGrafter"/>
</dbReference>
<dbReference type="GO" id="GO:0005833">
    <property type="term" value="C:hemoglobin complex"/>
    <property type="evidence" value="ECO:0007669"/>
    <property type="project" value="InterPro"/>
</dbReference>
<dbReference type="GO" id="GO:0031720">
    <property type="term" value="F:haptoglobin binding"/>
    <property type="evidence" value="ECO:0007669"/>
    <property type="project" value="TreeGrafter"/>
</dbReference>
<dbReference type="GO" id="GO:0020037">
    <property type="term" value="F:heme binding"/>
    <property type="evidence" value="ECO:0007669"/>
    <property type="project" value="InterPro"/>
</dbReference>
<dbReference type="GO" id="GO:0005506">
    <property type="term" value="F:iron ion binding"/>
    <property type="evidence" value="ECO:0007669"/>
    <property type="project" value="InterPro"/>
</dbReference>
<dbReference type="GO" id="GO:0043177">
    <property type="term" value="F:organic acid binding"/>
    <property type="evidence" value="ECO:0007669"/>
    <property type="project" value="TreeGrafter"/>
</dbReference>
<dbReference type="GO" id="GO:0019825">
    <property type="term" value="F:oxygen binding"/>
    <property type="evidence" value="ECO:0007669"/>
    <property type="project" value="InterPro"/>
</dbReference>
<dbReference type="GO" id="GO:0005344">
    <property type="term" value="F:oxygen carrier activity"/>
    <property type="evidence" value="ECO:0007669"/>
    <property type="project" value="UniProtKB-KW"/>
</dbReference>
<dbReference type="GO" id="GO:0004601">
    <property type="term" value="F:peroxidase activity"/>
    <property type="evidence" value="ECO:0007669"/>
    <property type="project" value="TreeGrafter"/>
</dbReference>
<dbReference type="GO" id="GO:0042744">
    <property type="term" value="P:hydrogen peroxide catabolic process"/>
    <property type="evidence" value="ECO:0007669"/>
    <property type="project" value="TreeGrafter"/>
</dbReference>
<dbReference type="CDD" id="cd08927">
    <property type="entry name" value="Hb-alpha-like"/>
    <property type="match status" value="1"/>
</dbReference>
<dbReference type="FunFam" id="1.10.490.10:FF:000002">
    <property type="entry name" value="Hemoglobin subunit alpha"/>
    <property type="match status" value="1"/>
</dbReference>
<dbReference type="Gene3D" id="1.10.490.10">
    <property type="entry name" value="Globins"/>
    <property type="match status" value="1"/>
</dbReference>
<dbReference type="InterPro" id="IPR000971">
    <property type="entry name" value="Globin"/>
</dbReference>
<dbReference type="InterPro" id="IPR009050">
    <property type="entry name" value="Globin-like_sf"/>
</dbReference>
<dbReference type="InterPro" id="IPR012292">
    <property type="entry name" value="Globin/Proto"/>
</dbReference>
<dbReference type="InterPro" id="IPR002338">
    <property type="entry name" value="Hemoglobin_a-typ"/>
</dbReference>
<dbReference type="InterPro" id="IPR050056">
    <property type="entry name" value="Hemoglobin_oxygen_transport"/>
</dbReference>
<dbReference type="InterPro" id="IPR002339">
    <property type="entry name" value="Hemoglobin_pi"/>
</dbReference>
<dbReference type="PANTHER" id="PTHR11442">
    <property type="entry name" value="HEMOGLOBIN FAMILY MEMBER"/>
    <property type="match status" value="1"/>
</dbReference>
<dbReference type="PANTHER" id="PTHR11442:SF48">
    <property type="entry name" value="HEMOGLOBIN SUBUNIT ALPHA"/>
    <property type="match status" value="1"/>
</dbReference>
<dbReference type="Pfam" id="PF00042">
    <property type="entry name" value="Globin"/>
    <property type="match status" value="1"/>
</dbReference>
<dbReference type="PRINTS" id="PR00612">
    <property type="entry name" value="ALPHAHAEM"/>
</dbReference>
<dbReference type="PRINTS" id="PR00815">
    <property type="entry name" value="PIHAEM"/>
</dbReference>
<dbReference type="SUPFAM" id="SSF46458">
    <property type="entry name" value="Globin-like"/>
    <property type="match status" value="1"/>
</dbReference>
<dbReference type="PROSITE" id="PS01033">
    <property type="entry name" value="GLOBIN"/>
    <property type="match status" value="1"/>
</dbReference>
<protein>
    <recommendedName>
        <fullName>Hemoglobin subunit alpha</fullName>
    </recommendedName>
    <alternativeName>
        <fullName>Alpha-globin</fullName>
    </alternativeName>
    <alternativeName>
        <fullName>Hemoglobin alpha chain</fullName>
    </alternativeName>
    <component>
        <recommendedName>
            <fullName evidence="2">Hemopressin</fullName>
        </recommendedName>
    </component>
</protein>
<reference key="1">
    <citation type="journal article" date="1998" name="J. Mol. Evol.">
        <title>Phylogenetic relationships within the genus Equus and the evolution of alpha and theta globin genes.</title>
        <authorList>
            <person name="Oakenfull E.A."/>
            <person name="Clegg J.B."/>
        </authorList>
    </citation>
    <scope>NUCLEOTIDE SEQUENCE [GENOMIC DNA]</scope>
</reference>